<keyword id="KW-0025">Alternative splicing</keyword>
<keyword id="KW-0325">Glycoprotein</keyword>
<keyword id="KW-0472">Membrane</keyword>
<keyword id="KW-1185">Reference proteome</keyword>
<keyword id="KW-0812">Transmembrane</keyword>
<keyword id="KW-1133">Transmembrane helix</keyword>
<feature type="chain" id="PRO_0000359727" description="Choline transporter-like protein 1">
    <location>
        <begin position="1"/>
        <end position="771"/>
    </location>
</feature>
<feature type="transmembrane region" description="Helical" evidence="2">
    <location>
        <begin position="96"/>
        <end position="116"/>
    </location>
</feature>
<feature type="transmembrane region" description="Helical" evidence="2">
    <location>
        <begin position="312"/>
        <end position="332"/>
    </location>
</feature>
<feature type="transmembrane region" description="Helical" evidence="2">
    <location>
        <begin position="335"/>
        <end position="355"/>
    </location>
</feature>
<feature type="transmembrane region" description="Helical" evidence="2">
    <location>
        <begin position="392"/>
        <end position="412"/>
    </location>
</feature>
<feature type="transmembrane region" description="Helical" evidence="2">
    <location>
        <begin position="441"/>
        <end position="461"/>
    </location>
</feature>
<feature type="transmembrane region" description="Helical" evidence="2">
    <location>
        <begin position="514"/>
        <end position="534"/>
    </location>
</feature>
<feature type="transmembrane region" description="Helical" evidence="2">
    <location>
        <begin position="566"/>
        <end position="586"/>
    </location>
</feature>
<feature type="transmembrane region" description="Helical" evidence="2">
    <location>
        <begin position="603"/>
        <end position="623"/>
    </location>
</feature>
<feature type="transmembrane region" description="Helical" evidence="2">
    <location>
        <begin position="662"/>
        <end position="682"/>
    </location>
</feature>
<feature type="transmembrane region" description="Helical" evidence="2">
    <location>
        <begin position="701"/>
        <end position="721"/>
    </location>
</feature>
<feature type="glycosylation site" description="N-linked (GlcNAc...) asparagine" evidence="2">
    <location>
        <position position="141"/>
    </location>
</feature>
<feature type="glycosylation site" description="N-linked (GlcNAc...) asparagine" evidence="2">
    <location>
        <position position="259"/>
    </location>
</feature>
<feature type="glycosylation site" description="N-linked (GlcNAc...) asparagine" evidence="2">
    <location>
        <position position="480"/>
    </location>
</feature>
<feature type="splice variant" id="VSP_036154" description="In isoform b." evidence="3">
    <original>MGRKKHRTIPAVEVYEKSDGFPMPTAPPMSPSRMDGVYPSHHVPPLHQAYHVQPASANHVPDQIARFNVIKPDRLAKRHNPQLYTK</original>
    <variation>MKQYNYSYEAAPQFCRNSAMAIQTAPGTAESKRDNNPMSDFNLQR</variation>
    <location>
        <begin position="1"/>
        <end position="86"/>
    </location>
</feature>
<feature type="splice variant" id="VSP_036155" description="In isoform c." evidence="3">
    <original>V</original>
    <variation>VPV</variation>
    <location>
        <position position="238"/>
    </location>
</feature>
<gene>
    <name type="primary">chtl-1</name>
    <name type="ORF">F35C8.7</name>
</gene>
<dbReference type="EMBL" id="FO080312">
    <property type="protein sequence ID" value="CCD62786.1"/>
    <property type="molecule type" value="Genomic_DNA"/>
</dbReference>
<dbReference type="EMBL" id="FO080312">
    <property type="protein sequence ID" value="CCD62787.1"/>
    <property type="molecule type" value="Genomic_DNA"/>
</dbReference>
<dbReference type="EMBL" id="FO080312">
    <property type="protein sequence ID" value="CCD62790.1"/>
    <property type="molecule type" value="Genomic_DNA"/>
</dbReference>
<dbReference type="PIR" id="T16254">
    <property type="entry name" value="T16254"/>
</dbReference>
<dbReference type="RefSeq" id="NP_001129928.1">
    <property type="nucleotide sequence ID" value="NM_001136456.2"/>
</dbReference>
<dbReference type="RefSeq" id="NP_001367416.1">
    <molecule id="Q20026-1"/>
    <property type="nucleotide sequence ID" value="NM_001380966.3"/>
</dbReference>
<dbReference type="RefSeq" id="NP_001367417.1">
    <molecule id="Q20026-3"/>
    <property type="nucleotide sequence ID" value="NM_001380967.2"/>
</dbReference>
<dbReference type="RefSeq" id="NP_741789.2">
    <property type="nucleotide sequence ID" value="NM_171685.5"/>
</dbReference>
<dbReference type="RefSeq" id="NP_741790.2">
    <molecule id="Q20026-2"/>
    <property type="nucleotide sequence ID" value="NM_171686.5"/>
</dbReference>
<dbReference type="SMR" id="Q20026"/>
<dbReference type="BioGRID" id="45742">
    <property type="interactions" value="1"/>
</dbReference>
<dbReference type="FunCoup" id="Q20026">
    <property type="interactions" value="1555"/>
</dbReference>
<dbReference type="STRING" id="6239.F35C8.7c.1"/>
<dbReference type="GlyCosmos" id="Q20026">
    <property type="glycosylation" value="3 sites, No reported glycans"/>
</dbReference>
<dbReference type="PaxDb" id="6239-F35C8.7c.1"/>
<dbReference type="PeptideAtlas" id="Q20026"/>
<dbReference type="EnsemblMetazoa" id="F35C8.7a.1">
    <molecule id="Q20026-1"/>
    <property type="protein sequence ID" value="F35C8.7a.1"/>
    <property type="gene ID" value="WBGene00018037"/>
</dbReference>
<dbReference type="EnsemblMetazoa" id="F35C8.7b.1">
    <molecule id="Q20026-2"/>
    <property type="protein sequence ID" value="F35C8.7b.1"/>
    <property type="gene ID" value="WBGene00018037"/>
</dbReference>
<dbReference type="EnsemblMetazoa" id="F35C8.7c.1">
    <molecule id="Q20026-3"/>
    <property type="protein sequence ID" value="F35C8.7c.1"/>
    <property type="gene ID" value="WBGene00018037"/>
</dbReference>
<dbReference type="GeneID" id="180809"/>
<dbReference type="KEGG" id="cel:CELE_F35C8.7"/>
<dbReference type="UCSC" id="F35C8.7b">
    <property type="organism name" value="c. elegans"/>
</dbReference>
<dbReference type="AGR" id="WB:WBGene00018037"/>
<dbReference type="CTD" id="180809"/>
<dbReference type="WormBase" id="F35C8.7a">
    <molecule id="Q20026-1"/>
    <property type="protein sequence ID" value="CE04499"/>
    <property type="gene ID" value="WBGene00018037"/>
    <property type="gene designation" value="chtl-1"/>
</dbReference>
<dbReference type="WormBase" id="F35C8.7b">
    <molecule id="Q20026-2"/>
    <property type="protein sequence ID" value="CE30970"/>
    <property type="gene ID" value="WBGene00018037"/>
    <property type="gene designation" value="chtl-1"/>
</dbReference>
<dbReference type="WormBase" id="F35C8.7c">
    <molecule id="Q20026-3"/>
    <property type="protein sequence ID" value="CE42729"/>
    <property type="gene ID" value="WBGene00018037"/>
    <property type="gene designation" value="chtl-1"/>
</dbReference>
<dbReference type="eggNOG" id="KOG1362">
    <property type="taxonomic scope" value="Eukaryota"/>
</dbReference>
<dbReference type="GeneTree" id="ENSGT00940000172011"/>
<dbReference type="HOGENOM" id="CLU_017181_3_1_1"/>
<dbReference type="InParanoid" id="Q20026"/>
<dbReference type="OMA" id="WIVAMRI"/>
<dbReference type="OrthoDB" id="420519at2759"/>
<dbReference type="PhylomeDB" id="Q20026"/>
<dbReference type="Reactome" id="R-CEL-1483191">
    <property type="pathway name" value="Synthesis of PC"/>
</dbReference>
<dbReference type="Reactome" id="R-CEL-425366">
    <property type="pathway name" value="Transport of bile salts and organic acids, metal ions and amine compounds"/>
</dbReference>
<dbReference type="Reactome" id="R-CEL-6798695">
    <property type="pathway name" value="Neutrophil degranulation"/>
</dbReference>
<dbReference type="PRO" id="PR:Q20026"/>
<dbReference type="Proteomes" id="UP000001940">
    <property type="component" value="Chromosome X"/>
</dbReference>
<dbReference type="Bgee" id="WBGene00018037">
    <property type="expression patterns" value="Expressed in pharyngeal muscle cell (C elegans) and 4 other cell types or tissues"/>
</dbReference>
<dbReference type="GO" id="GO:0016020">
    <property type="term" value="C:membrane"/>
    <property type="evidence" value="ECO:0000318"/>
    <property type="project" value="GO_Central"/>
</dbReference>
<dbReference type="GO" id="GO:0022857">
    <property type="term" value="F:transmembrane transporter activity"/>
    <property type="evidence" value="ECO:0000318"/>
    <property type="project" value="GO_Central"/>
</dbReference>
<dbReference type="GO" id="GO:0055085">
    <property type="term" value="P:transmembrane transport"/>
    <property type="evidence" value="ECO:0000318"/>
    <property type="project" value="GO_Central"/>
</dbReference>
<dbReference type="InterPro" id="IPR007603">
    <property type="entry name" value="Choline_transptr-like"/>
</dbReference>
<dbReference type="PANTHER" id="PTHR12385">
    <property type="entry name" value="CHOLINE TRANSPORTER-LIKE (SLC FAMILY 44)"/>
    <property type="match status" value="1"/>
</dbReference>
<dbReference type="PANTHER" id="PTHR12385:SF14">
    <property type="entry name" value="CHOLINE TRANSPORTER-LIKE 2"/>
    <property type="match status" value="1"/>
</dbReference>
<dbReference type="Pfam" id="PF04515">
    <property type="entry name" value="Choline_transpo"/>
    <property type="match status" value="1"/>
</dbReference>
<reference key="1">
    <citation type="journal article" date="1998" name="Science">
        <title>Genome sequence of the nematode C. elegans: a platform for investigating biology.</title>
        <authorList>
            <consortium name="The C. elegans sequencing consortium"/>
        </authorList>
    </citation>
    <scope>NUCLEOTIDE SEQUENCE [LARGE SCALE GENOMIC DNA]</scope>
    <source>
        <strain>Bristol N2</strain>
    </source>
</reference>
<proteinExistence type="inferred from homology"/>
<sequence length="771" mass="87311">MGRKKHRTIPAVEVYEKSDGFPMPTAPPMSPSRMDGVYPSHHVPPLHQAYHVQPASANHVPDQIARFNVIKPDRLAKRHNPQLYTKRGCTDVFCCFLFFVFLCGWVVVAGFGIMWGDPQRLIYPTDSEFRRCGVNLEGSYNFSKRPYLFYFDLTKCISYATALGGCQTTQLCVKECPSTYFSYLQLRTASVSEIQNKMKSVVYCTDDVDKTTVTTFQALQNLVQRGKCVSYTVKSVPVLQRCFPEAIFNAVDNVNNVLNSSNSLDYLKRTFGDDALIPQDIQITGQSSEVMKSVVEDQPVTHKVIHDLSQTWWQTLILIFAAGILSFIWTVIMRLLGSLIIWLSILIVLVALGFGAGFSWLKWNTLKTTGAIDDYSFHPAFDAYFEMPTTWLVVAIATSVLLLIFLLVILFIRQRISIACALISESSKAIGSMMSTLLFPLFPFLLHIGVFALWGSIAIWLASSGQEVCRLKETNGQVYNTSTKCDCTAKVTGCTYVGIEKESETIFWLQVYNLFAFFWLSCFVTALGDIALAGAFASYYWARDKRHDVPTFPVIRALNRAIRYNLGSIAFGSLIIAIVKIIRVLLEYIDHKLGKSQNKAVKWFLMCLKCCFWCLEVFFKFLTKNAYIMIAIYGKNFFSSAKDSFLLITRNIVRTVVVHKVAGILLFLGKSMITLGMGILSFYYFSGRWVVEGVPKVDLYYYFVPIVIVVIGSYFMADLFFDVYEMAVDTTFICFLEDSEQNDGSLERPFFMSEKLLEILGNKNDIPLHSK</sequence>
<accession>Q20026</accession>
<accession>B3WFU3</accession>
<accession>Q8MQ62</accession>
<organism>
    <name type="scientific">Caenorhabditis elegans</name>
    <dbReference type="NCBI Taxonomy" id="6239"/>
    <lineage>
        <taxon>Eukaryota</taxon>
        <taxon>Metazoa</taxon>
        <taxon>Ecdysozoa</taxon>
        <taxon>Nematoda</taxon>
        <taxon>Chromadorea</taxon>
        <taxon>Rhabditida</taxon>
        <taxon>Rhabditina</taxon>
        <taxon>Rhabditomorpha</taxon>
        <taxon>Rhabditoidea</taxon>
        <taxon>Rhabditidae</taxon>
        <taxon>Peloderinae</taxon>
        <taxon>Caenorhabditis</taxon>
    </lineage>
</organism>
<evidence type="ECO:0000250" key="1"/>
<evidence type="ECO:0000255" key="2"/>
<evidence type="ECO:0000305" key="3"/>
<comment type="subcellular location">
    <subcellularLocation>
        <location evidence="1">Membrane</location>
        <topology evidence="1">Multi-pass membrane protein</topology>
    </subcellularLocation>
</comment>
<comment type="alternative products">
    <event type="alternative splicing"/>
    <isoform>
        <id>Q20026-1</id>
        <name>a</name>
        <sequence type="displayed"/>
    </isoform>
    <isoform>
        <id>Q20026-2</id>
        <name>b</name>
        <sequence type="described" ref="VSP_036154"/>
    </isoform>
    <isoform>
        <id>Q20026-3</id>
        <name>c</name>
        <sequence type="described" ref="VSP_036155"/>
    </isoform>
</comment>
<comment type="similarity">
    <text evidence="3">Belongs to the CTL (choline transporter-like) family.</text>
</comment>
<name>CTL1L_CAEEL</name>
<protein>
    <recommendedName>
        <fullName>Choline transporter-like protein 1</fullName>
    </recommendedName>
</protein>